<accession>Q5R4F4</accession>
<evidence type="ECO:0000250" key="1"/>
<evidence type="ECO:0000250" key="2">
    <source>
        <dbReference type="UniProtKB" id="O94979"/>
    </source>
</evidence>
<evidence type="ECO:0000250" key="3">
    <source>
        <dbReference type="UniProtKB" id="Q3UPL0"/>
    </source>
</evidence>
<evidence type="ECO:0000250" key="4">
    <source>
        <dbReference type="UniProtKB" id="Q9Z2Q1"/>
    </source>
</evidence>
<evidence type="ECO:0000255" key="5">
    <source>
        <dbReference type="PROSITE-ProRule" id="PRU00221"/>
    </source>
</evidence>
<evidence type="ECO:0000256" key="6">
    <source>
        <dbReference type="SAM" id="MobiDB-lite"/>
    </source>
</evidence>
<evidence type="ECO:0000305" key="7"/>
<comment type="function">
    <text evidence="2 4">Component of the coat protein complex II (COPII) which promotes the formation of transport vesicles from the endoplasmic reticulum (ER) (By similarity). The coat has two main functions, the physical deformation of the endoplasmic reticulum membrane into vesicles and the selection of cargo molecules (By similarity).</text>
</comment>
<comment type="subunit">
    <text evidence="1 2">COPII is composed of at least 5 proteins: the SEC23/24 complex, the SEC13/31 complex and SAR1. SEC13 and SEC31 make a 2:2 tetramer that forms the edge element of the COPII outer coat. The tetramer self-assembles in multiple copies to form the complete polyhedral cage. Interacts (via WD 8) with SEC13 (By similarity). Interacts with PDCD6; interaction takes place in response to cytosolic calcium increase and leads to bridge together the BCR(KLHL12) complex and SEC31A, leading to monoubiquitination. Interacts with KLHL12 (By similarity).</text>
</comment>
<comment type="subcellular location">
    <subcellularLocation>
        <location evidence="1">Cytoplasm</location>
    </subcellularLocation>
    <subcellularLocation>
        <location evidence="2">Cytoplasmic vesicle</location>
        <location evidence="2">COPII-coated vesicle membrane</location>
        <topology evidence="2">Peripheral membrane protein</topology>
        <orientation evidence="2">Cytoplasmic side</orientation>
    </subcellularLocation>
    <subcellularLocation>
        <location evidence="1">Endoplasmic reticulum membrane</location>
        <topology evidence="1">Peripheral membrane protein</topology>
    </subcellularLocation>
    <text evidence="3 4">Associates with membranes in a GTP-dependent manner. Localizes to endoplasmic reticulum exit sites (ERES), also known as transitional endoplasmic reticulum (tER).</text>
</comment>
<comment type="domain">
    <text evidence="2">The ALG-2-binding site motif-2 (ABS-2) contains a PXPGF sequence that binds hydrophobic pocket 3 of PDCD6.</text>
</comment>
<comment type="PTM">
    <text evidence="2">Monoubiquitinated by the BCR(KLHL12) E3 ubiquitin ligase complex, leading to regulate the size of COPII coats.</text>
</comment>
<comment type="similarity">
    <text evidence="7">Belongs to the WD repeat SEC31 family.</text>
</comment>
<name>SC31A_PONAB</name>
<dbReference type="EMBL" id="CR861295">
    <property type="protein sequence ID" value="CAH93362.1"/>
    <property type="molecule type" value="mRNA"/>
</dbReference>
<dbReference type="RefSeq" id="NP_001126980.1">
    <property type="nucleotide sequence ID" value="NM_001133508.1"/>
</dbReference>
<dbReference type="RefSeq" id="XP_024101390.2">
    <property type="nucleotide sequence ID" value="XM_024245622.3"/>
</dbReference>
<dbReference type="SMR" id="Q5R4F4"/>
<dbReference type="STRING" id="9601.ENSPPYP00000016625"/>
<dbReference type="GeneID" id="100173999"/>
<dbReference type="KEGG" id="pon:100173999"/>
<dbReference type="CTD" id="22872"/>
<dbReference type="InParanoid" id="Q5R4F4"/>
<dbReference type="OrthoDB" id="542917at2759"/>
<dbReference type="Proteomes" id="UP000001595">
    <property type="component" value="Unplaced"/>
</dbReference>
<dbReference type="GO" id="GO:0030127">
    <property type="term" value="C:COPII vesicle coat"/>
    <property type="evidence" value="ECO:0000250"/>
    <property type="project" value="UniProtKB"/>
</dbReference>
<dbReference type="GO" id="GO:0030134">
    <property type="term" value="C:COPII-coated ER to Golgi transport vesicle"/>
    <property type="evidence" value="ECO:0000250"/>
    <property type="project" value="UniProtKB"/>
</dbReference>
<dbReference type="GO" id="GO:0070971">
    <property type="term" value="C:endoplasmic reticulum exit site"/>
    <property type="evidence" value="ECO:0000250"/>
    <property type="project" value="UniProtKB"/>
</dbReference>
<dbReference type="GO" id="GO:0005789">
    <property type="term" value="C:endoplasmic reticulum membrane"/>
    <property type="evidence" value="ECO:0007669"/>
    <property type="project" value="UniProtKB-SubCell"/>
</dbReference>
<dbReference type="GO" id="GO:0005198">
    <property type="term" value="F:structural molecule activity"/>
    <property type="evidence" value="ECO:0007669"/>
    <property type="project" value="TreeGrafter"/>
</dbReference>
<dbReference type="GO" id="GO:0090110">
    <property type="term" value="P:COPII-coated vesicle cargo loading"/>
    <property type="evidence" value="ECO:0007669"/>
    <property type="project" value="TreeGrafter"/>
</dbReference>
<dbReference type="GO" id="GO:0007029">
    <property type="term" value="P:endoplasmic reticulum organization"/>
    <property type="evidence" value="ECO:0007669"/>
    <property type="project" value="TreeGrafter"/>
</dbReference>
<dbReference type="GO" id="GO:0015031">
    <property type="term" value="P:protein transport"/>
    <property type="evidence" value="ECO:0007669"/>
    <property type="project" value="UniProtKB-KW"/>
</dbReference>
<dbReference type="FunFam" id="1.20.940.10:FF:000001">
    <property type="entry name" value="Protein transport protein Sec31A isoform A"/>
    <property type="match status" value="1"/>
</dbReference>
<dbReference type="FunFam" id="2.130.10.10:FF:000009">
    <property type="entry name" value="Protein transport protein Sec31A isoform A"/>
    <property type="match status" value="1"/>
</dbReference>
<dbReference type="FunFam" id="1.25.40.1030:FF:000001">
    <property type="entry name" value="protein transport protein Sec31A isoform X3"/>
    <property type="match status" value="1"/>
</dbReference>
<dbReference type="Gene3D" id="1.25.40.1030">
    <property type="match status" value="1"/>
</dbReference>
<dbReference type="Gene3D" id="1.20.940.10">
    <property type="entry name" value="Functional domain of the splicing factor Prp18"/>
    <property type="match status" value="1"/>
</dbReference>
<dbReference type="Gene3D" id="2.130.10.10">
    <property type="entry name" value="YVTN repeat-like/Quinoprotein amine dehydrogenase"/>
    <property type="match status" value="1"/>
</dbReference>
<dbReference type="InterPro" id="IPR024298">
    <property type="entry name" value="Sec16_Sec23-bd"/>
</dbReference>
<dbReference type="InterPro" id="IPR040251">
    <property type="entry name" value="SEC31-like"/>
</dbReference>
<dbReference type="InterPro" id="IPR015943">
    <property type="entry name" value="WD40/YVTN_repeat-like_dom_sf"/>
</dbReference>
<dbReference type="InterPro" id="IPR036322">
    <property type="entry name" value="WD40_repeat_dom_sf"/>
</dbReference>
<dbReference type="InterPro" id="IPR001680">
    <property type="entry name" value="WD40_rpt"/>
</dbReference>
<dbReference type="PANTHER" id="PTHR13923:SF23">
    <property type="entry name" value="PROTEIN TRANSPORT PROTEIN SEC31A"/>
    <property type="match status" value="1"/>
</dbReference>
<dbReference type="PANTHER" id="PTHR13923">
    <property type="entry name" value="SEC31-RELATED PROTEIN"/>
    <property type="match status" value="1"/>
</dbReference>
<dbReference type="Pfam" id="PF12931">
    <property type="entry name" value="TPR_Sec16"/>
    <property type="match status" value="1"/>
</dbReference>
<dbReference type="SMART" id="SM00320">
    <property type="entry name" value="WD40"/>
    <property type="match status" value="6"/>
</dbReference>
<dbReference type="SUPFAM" id="SSF50978">
    <property type="entry name" value="WD40 repeat-like"/>
    <property type="match status" value="1"/>
</dbReference>
<dbReference type="PROSITE" id="PS50082">
    <property type="entry name" value="WD_REPEATS_2"/>
    <property type="match status" value="1"/>
</dbReference>
<dbReference type="PROSITE" id="PS50294">
    <property type="entry name" value="WD_REPEATS_REGION"/>
    <property type="match status" value="1"/>
</dbReference>
<sequence>MKLKEVDRTAMQAWSPAQNHPIYLATGTSAQQLDATFSTNASLEIFELDLSDPSLDMKSCATFSSSHRYHKLIWGPYKMDSKGDVSGVLIAGGENGNIILYDPSKIIAGDKEVVIAQNDKHTGPVRALDVNIFQTNLVASGANESEIYIWDLNNFATPMTPGAKTQPPEDISCIAWNRQVQHILASASPSGRATVWDLRKNEPIIKVSDHSNRMHCSGLAWHPDVATQMVLASEDDRLPVIQMWDLRFASSPLRVLENHARGILAIAWSMADPELLLSCGKDAKILCSNPNTGEVLYELPTNTQWCFDIQWCPRNPAVLSAASFDGRISVYSIMGGSTDGLRQKQVDKLSSSFGNLDPFGTGQPLPPLQIPQQTAQHSIVLPLKKPPKWIRRPVGASFSFGGKLVTFENVRMPSHQGAEQQQQQHHVFISQVVTEKEFLSRSDQLQQAVQSQGFISYCQKKIDASQTEFEKNVWSFLKVNFEDDSRGKYLELLGYRKEDLGKKIALALNKVDGANVALKDSDQVAQSDGEESPAAEEQLLGEHIKEEKEESEFLPSSGGTFNISVSGDIDGLITQALLTGNFESAVDLCLHDNRMADAIILAIAGGQELLARTQKKYFAKSQSKITRLITAVVMKNWKEIVESCDLKNWREALAAVLTYAKPDEFSALCDLLGTRLENEGDSLLQTQACLCYICAGNVEKLVACWTKAQDGSHPLSLQDLIEKVVILRKAVQLTQAMDTSTVGVLLAAKMSQYANLLAAQGSIAAALAFLPDNTNQPNIMQLRDRLCRAQGEPVAGHESPKIPYEEQQLPKGRPGPVAGHHQMPRVQTQQYYPHGENPPPPGFIMHGNVNPNAAGQLPTSPGHMHTQVPPYPQPQRPQNGWNDPPALNRVPKKKKMPENFMPPVPITSPIMNPLGDPQSQMLQQQPSAPVPLSSQSSFPQPHLPGGQHFHGIQQPLGQTGMPPSFSKPNIEGAPGAPIGNTFQHVQSLPTKKITKKPIPDEHLILKTTFEDLIQRCLSSATDPQTKRKLDDASKRLEFLYDKLREQTLSPTITSGLHNIARSIETRNYSEGLTMHTHIVSTSNFSETSAFMPVLKVVLTQANKLGV</sequence>
<gene>
    <name type="primary">SEC31A</name>
    <name type="synonym">SEC31L1</name>
</gene>
<organism>
    <name type="scientific">Pongo abelii</name>
    <name type="common">Sumatran orangutan</name>
    <name type="synonym">Pongo pygmaeus abelii</name>
    <dbReference type="NCBI Taxonomy" id="9601"/>
    <lineage>
        <taxon>Eukaryota</taxon>
        <taxon>Metazoa</taxon>
        <taxon>Chordata</taxon>
        <taxon>Craniata</taxon>
        <taxon>Vertebrata</taxon>
        <taxon>Euteleostomi</taxon>
        <taxon>Mammalia</taxon>
        <taxon>Eutheria</taxon>
        <taxon>Euarchontoglires</taxon>
        <taxon>Primates</taxon>
        <taxon>Haplorrhini</taxon>
        <taxon>Catarrhini</taxon>
        <taxon>Hominidae</taxon>
        <taxon>Pongo</taxon>
    </lineage>
</organism>
<reference key="1">
    <citation type="submission" date="2004-11" db="EMBL/GenBank/DDBJ databases">
        <authorList>
            <consortium name="The German cDNA consortium"/>
        </authorList>
    </citation>
    <scope>NUCLEOTIDE SEQUENCE [LARGE SCALE MRNA]</scope>
    <source>
        <tissue>Brain cortex</tissue>
    </source>
</reference>
<proteinExistence type="evidence at transcript level"/>
<feature type="chain" id="PRO_0000295149" description="Protein transport protein Sec31A">
    <location>
        <begin position="1"/>
        <end position="1106"/>
    </location>
</feature>
<feature type="repeat" description="WD 1">
    <location>
        <begin position="4"/>
        <end position="47"/>
    </location>
</feature>
<feature type="repeat" description="WD 2">
    <location>
        <begin position="68"/>
        <end position="111"/>
    </location>
</feature>
<feature type="repeat" description="WD 3">
    <location>
        <begin position="120"/>
        <end position="160"/>
    </location>
</feature>
<feature type="repeat" description="WD 4">
    <location>
        <begin position="166"/>
        <end position="206"/>
    </location>
</feature>
<feature type="repeat" description="WD 5">
    <location>
        <begin position="209"/>
        <end position="254"/>
    </location>
</feature>
<feature type="repeat" description="WD 6">
    <location>
        <begin position="258"/>
        <end position="298"/>
    </location>
</feature>
<feature type="repeat" description="WD 7">
    <location>
        <begin position="301"/>
        <end position="342"/>
    </location>
</feature>
<feature type="repeat" description="WD 8; interaction with SEC13" evidence="5">
    <location>
        <begin position="397"/>
        <end position="430"/>
    </location>
</feature>
<feature type="region of interest" description="Interaction with SEC13" evidence="2">
    <location>
        <begin position="161"/>
        <end position="471"/>
    </location>
</feature>
<feature type="region of interest" description="Interaction with PDCD6" evidence="2">
    <location>
        <begin position="800"/>
        <end position="999"/>
    </location>
</feature>
<feature type="region of interest" description="Disordered" evidence="6">
    <location>
        <begin position="859"/>
        <end position="980"/>
    </location>
</feature>
<feature type="short sequence motif" description="ALG-2-binding site motif-2 (ABS-2)," evidence="2">
    <location>
        <begin position="842"/>
        <end position="848"/>
    </location>
</feature>
<feature type="compositionally biased region" description="Polar residues" evidence="6">
    <location>
        <begin position="917"/>
        <end position="939"/>
    </location>
</feature>
<feature type="modified residue" description="Phosphoserine" evidence="2">
    <location>
        <position position="527"/>
    </location>
</feature>
<feature type="modified residue" description="Phosphoserine" evidence="2">
    <location>
        <position position="532"/>
    </location>
</feature>
<feature type="modified residue" description="Phosphoserine" evidence="2">
    <location>
        <position position="799"/>
    </location>
</feature>
<feature type="modified residue" description="Phosphothreonine" evidence="2">
    <location>
        <position position="1047"/>
    </location>
</feature>
<feature type="modified residue" description="Phosphoserine" evidence="2">
    <location>
        <position position="1049"/>
    </location>
</feature>
<feature type="cross-link" description="Glycyl lysine isopeptide (Lys-Gly) (interchain with G-Cter in ubiquitin)" evidence="2">
    <location>
        <position position="647"/>
    </location>
</feature>
<feature type="cross-link" description="Glycyl lysine isopeptide (Lys-Gly) (interchain with G-Cter in ubiquitin)" evidence="2">
    <location>
        <position position="1103"/>
    </location>
</feature>
<protein>
    <recommendedName>
        <fullName>Protein transport protein Sec31A</fullName>
    </recommendedName>
    <alternativeName>
        <fullName>SEC31-like protein 1</fullName>
    </alternativeName>
    <alternativeName>
        <fullName>SEC31-related protein A</fullName>
    </alternativeName>
</protein>
<keyword id="KW-0963">Cytoplasm</keyword>
<keyword id="KW-0968">Cytoplasmic vesicle</keyword>
<keyword id="KW-0256">Endoplasmic reticulum</keyword>
<keyword id="KW-0931">ER-Golgi transport</keyword>
<keyword id="KW-1017">Isopeptide bond</keyword>
<keyword id="KW-0472">Membrane</keyword>
<keyword id="KW-0597">Phosphoprotein</keyword>
<keyword id="KW-0653">Protein transport</keyword>
<keyword id="KW-1185">Reference proteome</keyword>
<keyword id="KW-0677">Repeat</keyword>
<keyword id="KW-0813">Transport</keyword>
<keyword id="KW-0832">Ubl conjugation</keyword>
<keyword id="KW-0853">WD repeat</keyword>